<comment type="function">
    <text evidence="1">Binds to sigma F and blocks its ability to form an RNA polymerase holoenzyme (E-sigma F). Phosphorylates SpoIIAA on a serine residue. This phosphorylation may enable SpoIIAA to act as an anti-anti-sigma factor that counteracts SpoIIAB and thus releases sigma F from inhibition.</text>
</comment>
<comment type="catalytic activity">
    <reaction evidence="1">
        <text>L-seryl-[protein] + ATP = O-phospho-L-seryl-[protein] + ADP + H(+)</text>
        <dbReference type="Rhea" id="RHEA:17989"/>
        <dbReference type="Rhea" id="RHEA-COMP:9863"/>
        <dbReference type="Rhea" id="RHEA-COMP:11604"/>
        <dbReference type="ChEBI" id="CHEBI:15378"/>
        <dbReference type="ChEBI" id="CHEBI:29999"/>
        <dbReference type="ChEBI" id="CHEBI:30616"/>
        <dbReference type="ChEBI" id="CHEBI:83421"/>
        <dbReference type="ChEBI" id="CHEBI:456216"/>
        <dbReference type="EC" id="2.7.11.1"/>
    </reaction>
</comment>
<comment type="catalytic activity">
    <reaction evidence="1">
        <text>L-threonyl-[protein] + ATP = O-phospho-L-threonyl-[protein] + ADP + H(+)</text>
        <dbReference type="Rhea" id="RHEA:46608"/>
        <dbReference type="Rhea" id="RHEA-COMP:11060"/>
        <dbReference type="Rhea" id="RHEA-COMP:11605"/>
        <dbReference type="ChEBI" id="CHEBI:15378"/>
        <dbReference type="ChEBI" id="CHEBI:30013"/>
        <dbReference type="ChEBI" id="CHEBI:30616"/>
        <dbReference type="ChEBI" id="CHEBI:61977"/>
        <dbReference type="ChEBI" id="CHEBI:456216"/>
        <dbReference type="EC" id="2.7.11.1"/>
    </reaction>
</comment>
<comment type="similarity">
    <text evidence="1">Belongs to the anti-sigma-factor family.</text>
</comment>
<dbReference type="EC" id="2.7.11.1" evidence="1"/>
<dbReference type="EMBL" id="CP000764">
    <property type="protein sequence ID" value="ABS23005.1"/>
    <property type="molecule type" value="Genomic_DNA"/>
</dbReference>
<dbReference type="RefSeq" id="WP_012095231.1">
    <property type="nucleotide sequence ID" value="NC_009674.1"/>
</dbReference>
<dbReference type="SMR" id="A7GS97"/>
<dbReference type="STRING" id="315749.Bcer98_2772"/>
<dbReference type="GeneID" id="33898027"/>
<dbReference type="KEGG" id="bcy:Bcer98_2772"/>
<dbReference type="eggNOG" id="COG2172">
    <property type="taxonomic scope" value="Bacteria"/>
</dbReference>
<dbReference type="HOGENOM" id="CLU_090336_11_0_9"/>
<dbReference type="OrthoDB" id="9768808at2"/>
<dbReference type="Proteomes" id="UP000002300">
    <property type="component" value="Chromosome"/>
</dbReference>
<dbReference type="GO" id="GO:0005524">
    <property type="term" value="F:ATP binding"/>
    <property type="evidence" value="ECO:0007669"/>
    <property type="project" value="UniProtKB-KW"/>
</dbReference>
<dbReference type="GO" id="GO:0106310">
    <property type="term" value="F:protein serine kinase activity"/>
    <property type="evidence" value="ECO:0007669"/>
    <property type="project" value="RHEA"/>
</dbReference>
<dbReference type="GO" id="GO:0004674">
    <property type="term" value="F:protein serine/threonine kinase activity"/>
    <property type="evidence" value="ECO:0007669"/>
    <property type="project" value="UniProtKB-KW"/>
</dbReference>
<dbReference type="GO" id="GO:0016989">
    <property type="term" value="F:sigma factor antagonist activity"/>
    <property type="evidence" value="ECO:0007669"/>
    <property type="project" value="InterPro"/>
</dbReference>
<dbReference type="GO" id="GO:0030436">
    <property type="term" value="P:asexual sporulation"/>
    <property type="evidence" value="ECO:0007669"/>
    <property type="project" value="UniProtKB-UniRule"/>
</dbReference>
<dbReference type="GO" id="GO:0042174">
    <property type="term" value="P:negative regulation of sporulation resulting in formation of a cellular spore"/>
    <property type="evidence" value="ECO:0007669"/>
    <property type="project" value="InterPro"/>
</dbReference>
<dbReference type="GO" id="GO:0030435">
    <property type="term" value="P:sporulation resulting in formation of a cellular spore"/>
    <property type="evidence" value="ECO:0007669"/>
    <property type="project" value="UniProtKB-KW"/>
</dbReference>
<dbReference type="FunFam" id="3.30.565.10:FF:000022">
    <property type="entry name" value="Anti-sigma F factor"/>
    <property type="match status" value="1"/>
</dbReference>
<dbReference type="Gene3D" id="3.30.565.10">
    <property type="entry name" value="Histidine kinase-like ATPase, C-terminal domain"/>
    <property type="match status" value="1"/>
</dbReference>
<dbReference type="HAMAP" id="MF_00637">
    <property type="entry name" value="Anti_sigma_F"/>
    <property type="match status" value="1"/>
</dbReference>
<dbReference type="InterPro" id="IPR050267">
    <property type="entry name" value="Anti-sigma-factor_SerPK"/>
</dbReference>
<dbReference type="InterPro" id="IPR010194">
    <property type="entry name" value="Anti-sigma_F"/>
</dbReference>
<dbReference type="InterPro" id="IPR036890">
    <property type="entry name" value="HATPase_C_sf"/>
</dbReference>
<dbReference type="NCBIfam" id="TIGR01925">
    <property type="entry name" value="spIIAB"/>
    <property type="match status" value="1"/>
</dbReference>
<dbReference type="PANTHER" id="PTHR35526:SF3">
    <property type="entry name" value="ANTI-SIGMA-F FACTOR RSBW"/>
    <property type="match status" value="1"/>
</dbReference>
<dbReference type="PANTHER" id="PTHR35526">
    <property type="entry name" value="ANTI-SIGMA-F FACTOR RSBW-RELATED"/>
    <property type="match status" value="1"/>
</dbReference>
<dbReference type="Pfam" id="PF13581">
    <property type="entry name" value="HATPase_c_2"/>
    <property type="match status" value="1"/>
</dbReference>
<dbReference type="SMART" id="SM00387">
    <property type="entry name" value="HATPase_c"/>
    <property type="match status" value="1"/>
</dbReference>
<dbReference type="SUPFAM" id="SSF55874">
    <property type="entry name" value="ATPase domain of HSP90 chaperone/DNA topoisomerase II/histidine kinase"/>
    <property type="match status" value="1"/>
</dbReference>
<organism>
    <name type="scientific">Bacillus cytotoxicus (strain DSM 22905 / CIP 110041 / 391-98 / NVH 391-98)</name>
    <dbReference type="NCBI Taxonomy" id="315749"/>
    <lineage>
        <taxon>Bacteria</taxon>
        <taxon>Bacillati</taxon>
        <taxon>Bacillota</taxon>
        <taxon>Bacilli</taxon>
        <taxon>Bacillales</taxon>
        <taxon>Bacillaceae</taxon>
        <taxon>Bacillus</taxon>
        <taxon>Bacillus cereus group</taxon>
    </lineage>
</organism>
<proteinExistence type="inferred from homology"/>
<sequence length="146" mass="16286">MRNEMNLQFSALSQNESFARVTVAAFIAQLDPTMEELTEIKTVVSEAVTNAIIHGYEGNPEGIVYISVILEEAMVKLTIRDEGVGIFNLDEARQPLFTTKPELERSGMGFTIMENFMDEVEIISNESFGTTIHLTKYLSNSNALCN</sequence>
<gene>
    <name evidence="1" type="primary">spoIIAB</name>
    <name type="ordered locus">Bcer98_2772</name>
</gene>
<feature type="chain" id="PRO_1000082671" description="Anti-sigma F factor">
    <location>
        <begin position="1"/>
        <end position="146"/>
    </location>
</feature>
<reference key="1">
    <citation type="journal article" date="2008" name="Chem. Biol. Interact.">
        <title>Extending the Bacillus cereus group genomics to putative food-borne pathogens of different toxicity.</title>
        <authorList>
            <person name="Lapidus A."/>
            <person name="Goltsman E."/>
            <person name="Auger S."/>
            <person name="Galleron N."/>
            <person name="Segurens B."/>
            <person name="Dossat C."/>
            <person name="Land M.L."/>
            <person name="Broussolle V."/>
            <person name="Brillard J."/>
            <person name="Guinebretiere M.-H."/>
            <person name="Sanchis V."/>
            <person name="Nguen-the C."/>
            <person name="Lereclus D."/>
            <person name="Richardson P."/>
            <person name="Wincker P."/>
            <person name="Weissenbach J."/>
            <person name="Ehrlich S.D."/>
            <person name="Sorokin A."/>
        </authorList>
    </citation>
    <scope>NUCLEOTIDE SEQUENCE [LARGE SCALE GENOMIC DNA]</scope>
    <source>
        <strain>DSM 22905 / CIP 110041 / 391-98 / NVH 391-98</strain>
    </source>
</reference>
<name>SP2AB_BACCN</name>
<protein>
    <recommendedName>
        <fullName evidence="1">Anti-sigma F factor</fullName>
        <ecNumber evidence="1">2.7.11.1</ecNumber>
    </recommendedName>
    <alternativeName>
        <fullName evidence="1">Stage II sporulation protein AB</fullName>
    </alternativeName>
</protein>
<accession>A7GS97</accession>
<keyword id="KW-0067">ATP-binding</keyword>
<keyword id="KW-0418">Kinase</keyword>
<keyword id="KW-0547">Nucleotide-binding</keyword>
<keyword id="KW-0723">Serine/threonine-protein kinase</keyword>
<keyword id="KW-0749">Sporulation</keyword>
<keyword id="KW-0808">Transferase</keyword>
<evidence type="ECO:0000255" key="1">
    <source>
        <dbReference type="HAMAP-Rule" id="MF_00637"/>
    </source>
</evidence>